<sequence>MSRRYFGTDGVRGRANATLTADLALRVGMAAGLIFQRGEYRHRVVIGKDTRLSGYMIENALVAGFTSVGMDVLLLGPVPTPAVGMLTRSMRADLGVMISASHNPFDDNGIKLFGPDGFKLSDEVEREIEELIDEDIAKRLAKPAEIGRAKRLEGVHARYIEYAKRTLPRDQTFDGIRVVVDCANGAGYKVAPEALWELGADVVSIGVEPDGMNINRDVGSTSPAALSAKVREVRADIGIALDGDADRVIIVDEKGHVVDGDQLMAVVAESFKEDGRLARSGLVATVMSNLGLERHLAGEGISLARTAVGDRYVLERMRADGYNVGGEQSGHIILSDYSTTGDGLVAALQVLAVVARRGKPVSEVCHRFDPLPQILKNVRYASGRPLEDEKVKIVIADAERRLANHGRLLIRPSGTEPVIRVMGEGDDRDLVENVVDDVIDVLQKVAA</sequence>
<name>GLMM_XANP2</name>
<protein>
    <recommendedName>
        <fullName evidence="1">Phosphoglucosamine mutase</fullName>
        <ecNumber evidence="1">5.4.2.10</ecNumber>
    </recommendedName>
</protein>
<organism>
    <name type="scientific">Xanthobacter autotrophicus (strain ATCC BAA-1158 / Py2)</name>
    <dbReference type="NCBI Taxonomy" id="78245"/>
    <lineage>
        <taxon>Bacteria</taxon>
        <taxon>Pseudomonadati</taxon>
        <taxon>Pseudomonadota</taxon>
        <taxon>Alphaproteobacteria</taxon>
        <taxon>Hyphomicrobiales</taxon>
        <taxon>Xanthobacteraceae</taxon>
        <taxon>Xanthobacter</taxon>
    </lineage>
</organism>
<proteinExistence type="inferred from homology"/>
<keyword id="KW-0413">Isomerase</keyword>
<keyword id="KW-0460">Magnesium</keyword>
<keyword id="KW-0479">Metal-binding</keyword>
<keyword id="KW-0597">Phosphoprotein</keyword>
<keyword id="KW-1185">Reference proteome</keyword>
<accession>A7IIG5</accession>
<reference key="1">
    <citation type="submission" date="2007-07" db="EMBL/GenBank/DDBJ databases">
        <title>Complete sequence of chromosome of Xanthobacter autotrophicus Py2.</title>
        <authorList>
            <consortium name="US DOE Joint Genome Institute"/>
            <person name="Copeland A."/>
            <person name="Lucas S."/>
            <person name="Lapidus A."/>
            <person name="Barry K."/>
            <person name="Glavina del Rio T."/>
            <person name="Hammon N."/>
            <person name="Israni S."/>
            <person name="Dalin E."/>
            <person name="Tice H."/>
            <person name="Pitluck S."/>
            <person name="Sims D."/>
            <person name="Brettin T."/>
            <person name="Bruce D."/>
            <person name="Detter J.C."/>
            <person name="Han C."/>
            <person name="Tapia R."/>
            <person name="Brainard J."/>
            <person name="Schmutz J."/>
            <person name="Larimer F."/>
            <person name="Land M."/>
            <person name="Hauser L."/>
            <person name="Kyrpides N."/>
            <person name="Kim E."/>
            <person name="Ensigns S.A."/>
            <person name="Richardson P."/>
        </authorList>
    </citation>
    <scope>NUCLEOTIDE SEQUENCE [LARGE SCALE GENOMIC DNA]</scope>
    <source>
        <strain>ATCC BAA-1158 / Py2</strain>
    </source>
</reference>
<comment type="function">
    <text evidence="1">Catalyzes the conversion of glucosamine-6-phosphate to glucosamine-1-phosphate.</text>
</comment>
<comment type="catalytic activity">
    <reaction evidence="1">
        <text>alpha-D-glucosamine 1-phosphate = D-glucosamine 6-phosphate</text>
        <dbReference type="Rhea" id="RHEA:23424"/>
        <dbReference type="ChEBI" id="CHEBI:58516"/>
        <dbReference type="ChEBI" id="CHEBI:58725"/>
        <dbReference type="EC" id="5.4.2.10"/>
    </reaction>
</comment>
<comment type="cofactor">
    <cofactor evidence="1">
        <name>Mg(2+)</name>
        <dbReference type="ChEBI" id="CHEBI:18420"/>
    </cofactor>
    <text evidence="1">Binds 1 Mg(2+) ion per subunit.</text>
</comment>
<comment type="PTM">
    <text evidence="1">Activated by phosphorylation.</text>
</comment>
<comment type="similarity">
    <text evidence="1">Belongs to the phosphohexose mutase family.</text>
</comment>
<comment type="sequence caution" evidence="2">
    <conflict type="erroneous initiation">
        <sequence resource="EMBL-CDS" id="ABS67808"/>
    </conflict>
</comment>
<feature type="chain" id="PRO_0000343605" description="Phosphoglucosamine mutase">
    <location>
        <begin position="1"/>
        <end position="447"/>
    </location>
</feature>
<feature type="active site" description="Phosphoserine intermediate" evidence="1">
    <location>
        <position position="101"/>
    </location>
</feature>
<feature type="binding site" description="via phosphate group" evidence="1">
    <location>
        <position position="101"/>
    </location>
    <ligand>
        <name>Mg(2+)</name>
        <dbReference type="ChEBI" id="CHEBI:18420"/>
    </ligand>
</feature>
<feature type="binding site" evidence="1">
    <location>
        <position position="242"/>
    </location>
    <ligand>
        <name>Mg(2+)</name>
        <dbReference type="ChEBI" id="CHEBI:18420"/>
    </ligand>
</feature>
<feature type="binding site" evidence="1">
    <location>
        <position position="244"/>
    </location>
    <ligand>
        <name>Mg(2+)</name>
        <dbReference type="ChEBI" id="CHEBI:18420"/>
    </ligand>
</feature>
<feature type="binding site" evidence="1">
    <location>
        <position position="246"/>
    </location>
    <ligand>
        <name>Mg(2+)</name>
        <dbReference type="ChEBI" id="CHEBI:18420"/>
    </ligand>
</feature>
<feature type="modified residue" description="Phosphoserine" evidence="1">
    <location>
        <position position="101"/>
    </location>
</feature>
<evidence type="ECO:0000255" key="1">
    <source>
        <dbReference type="HAMAP-Rule" id="MF_01554"/>
    </source>
</evidence>
<evidence type="ECO:0000305" key="2"/>
<gene>
    <name evidence="1" type="primary">glmM</name>
    <name type="ordered locus">Xaut_2566</name>
</gene>
<dbReference type="EC" id="5.4.2.10" evidence="1"/>
<dbReference type="EMBL" id="CP000781">
    <property type="protein sequence ID" value="ABS67808.1"/>
    <property type="status" value="ALT_INIT"/>
    <property type="molecule type" value="Genomic_DNA"/>
</dbReference>
<dbReference type="SMR" id="A7IIG5"/>
<dbReference type="STRING" id="78245.Xaut_2566"/>
<dbReference type="KEGG" id="xau:Xaut_2566"/>
<dbReference type="eggNOG" id="COG1109">
    <property type="taxonomic scope" value="Bacteria"/>
</dbReference>
<dbReference type="HOGENOM" id="CLU_016950_7_0_5"/>
<dbReference type="OrthoDB" id="9803322at2"/>
<dbReference type="Proteomes" id="UP000002417">
    <property type="component" value="Chromosome"/>
</dbReference>
<dbReference type="GO" id="GO:0005829">
    <property type="term" value="C:cytosol"/>
    <property type="evidence" value="ECO:0007669"/>
    <property type="project" value="TreeGrafter"/>
</dbReference>
<dbReference type="GO" id="GO:0000287">
    <property type="term" value="F:magnesium ion binding"/>
    <property type="evidence" value="ECO:0007669"/>
    <property type="project" value="UniProtKB-UniRule"/>
</dbReference>
<dbReference type="GO" id="GO:0008966">
    <property type="term" value="F:phosphoglucosamine mutase activity"/>
    <property type="evidence" value="ECO:0007669"/>
    <property type="project" value="UniProtKB-UniRule"/>
</dbReference>
<dbReference type="GO" id="GO:0004615">
    <property type="term" value="F:phosphomannomutase activity"/>
    <property type="evidence" value="ECO:0007669"/>
    <property type="project" value="TreeGrafter"/>
</dbReference>
<dbReference type="GO" id="GO:0005975">
    <property type="term" value="P:carbohydrate metabolic process"/>
    <property type="evidence" value="ECO:0007669"/>
    <property type="project" value="InterPro"/>
</dbReference>
<dbReference type="GO" id="GO:0009252">
    <property type="term" value="P:peptidoglycan biosynthetic process"/>
    <property type="evidence" value="ECO:0007669"/>
    <property type="project" value="TreeGrafter"/>
</dbReference>
<dbReference type="GO" id="GO:0006048">
    <property type="term" value="P:UDP-N-acetylglucosamine biosynthetic process"/>
    <property type="evidence" value="ECO:0007669"/>
    <property type="project" value="TreeGrafter"/>
</dbReference>
<dbReference type="CDD" id="cd05802">
    <property type="entry name" value="GlmM"/>
    <property type="match status" value="1"/>
</dbReference>
<dbReference type="FunFam" id="3.30.310.50:FF:000001">
    <property type="entry name" value="Phosphoglucosamine mutase"/>
    <property type="match status" value="1"/>
</dbReference>
<dbReference type="FunFam" id="3.40.120.10:FF:000001">
    <property type="entry name" value="Phosphoglucosamine mutase"/>
    <property type="match status" value="1"/>
</dbReference>
<dbReference type="FunFam" id="3.40.120.10:FF:000003">
    <property type="entry name" value="Phosphoglucosamine mutase"/>
    <property type="match status" value="1"/>
</dbReference>
<dbReference type="Gene3D" id="3.40.120.10">
    <property type="entry name" value="Alpha-D-Glucose-1,6-Bisphosphate, subunit A, domain 3"/>
    <property type="match status" value="3"/>
</dbReference>
<dbReference type="Gene3D" id="3.30.310.50">
    <property type="entry name" value="Alpha-D-phosphohexomutase, C-terminal domain"/>
    <property type="match status" value="1"/>
</dbReference>
<dbReference type="HAMAP" id="MF_01554_B">
    <property type="entry name" value="GlmM_B"/>
    <property type="match status" value="1"/>
</dbReference>
<dbReference type="InterPro" id="IPR005844">
    <property type="entry name" value="A-D-PHexomutase_a/b/a-I"/>
</dbReference>
<dbReference type="InterPro" id="IPR016055">
    <property type="entry name" value="A-D-PHexomutase_a/b/a-I/II/III"/>
</dbReference>
<dbReference type="InterPro" id="IPR005845">
    <property type="entry name" value="A-D-PHexomutase_a/b/a-II"/>
</dbReference>
<dbReference type="InterPro" id="IPR005846">
    <property type="entry name" value="A-D-PHexomutase_a/b/a-III"/>
</dbReference>
<dbReference type="InterPro" id="IPR005843">
    <property type="entry name" value="A-D-PHexomutase_C"/>
</dbReference>
<dbReference type="InterPro" id="IPR036900">
    <property type="entry name" value="A-D-PHexomutase_C_sf"/>
</dbReference>
<dbReference type="InterPro" id="IPR016066">
    <property type="entry name" value="A-D-PHexomutase_CS"/>
</dbReference>
<dbReference type="InterPro" id="IPR005841">
    <property type="entry name" value="Alpha-D-phosphohexomutase_SF"/>
</dbReference>
<dbReference type="InterPro" id="IPR006352">
    <property type="entry name" value="GlmM_bact"/>
</dbReference>
<dbReference type="InterPro" id="IPR050060">
    <property type="entry name" value="Phosphoglucosamine_mutase"/>
</dbReference>
<dbReference type="NCBIfam" id="TIGR01455">
    <property type="entry name" value="glmM"/>
    <property type="match status" value="1"/>
</dbReference>
<dbReference type="NCBIfam" id="NF008139">
    <property type="entry name" value="PRK10887.1"/>
    <property type="match status" value="1"/>
</dbReference>
<dbReference type="PANTHER" id="PTHR42946:SF1">
    <property type="entry name" value="PHOSPHOGLUCOMUTASE (ALPHA-D-GLUCOSE-1,6-BISPHOSPHATE-DEPENDENT)"/>
    <property type="match status" value="1"/>
</dbReference>
<dbReference type="PANTHER" id="PTHR42946">
    <property type="entry name" value="PHOSPHOHEXOSE MUTASE"/>
    <property type="match status" value="1"/>
</dbReference>
<dbReference type="Pfam" id="PF02878">
    <property type="entry name" value="PGM_PMM_I"/>
    <property type="match status" value="1"/>
</dbReference>
<dbReference type="Pfam" id="PF02879">
    <property type="entry name" value="PGM_PMM_II"/>
    <property type="match status" value="1"/>
</dbReference>
<dbReference type="Pfam" id="PF02880">
    <property type="entry name" value="PGM_PMM_III"/>
    <property type="match status" value="1"/>
</dbReference>
<dbReference type="Pfam" id="PF00408">
    <property type="entry name" value="PGM_PMM_IV"/>
    <property type="match status" value="1"/>
</dbReference>
<dbReference type="PRINTS" id="PR00509">
    <property type="entry name" value="PGMPMM"/>
</dbReference>
<dbReference type="SUPFAM" id="SSF55957">
    <property type="entry name" value="Phosphoglucomutase, C-terminal domain"/>
    <property type="match status" value="1"/>
</dbReference>
<dbReference type="SUPFAM" id="SSF53738">
    <property type="entry name" value="Phosphoglucomutase, first 3 domains"/>
    <property type="match status" value="2"/>
</dbReference>
<dbReference type="PROSITE" id="PS00710">
    <property type="entry name" value="PGM_PMM"/>
    <property type="match status" value="1"/>
</dbReference>